<protein>
    <recommendedName>
        <fullName>Bifunctional aspartokinase/homoserine dehydrogenase 1</fullName>
    </recommendedName>
    <alternativeName>
        <fullName>Aspartokinase I/homoserine dehydrogenase I</fullName>
        <shortName>AKI-HDI</shortName>
    </alternativeName>
    <domain>
        <recommendedName>
            <fullName>Aspartokinase</fullName>
            <ecNumber>2.7.2.4</ecNumber>
        </recommendedName>
    </domain>
    <domain>
        <recommendedName>
            <fullName>Homoserine dehydrogenase</fullName>
            <ecNumber>1.1.1.3</ecNumber>
        </recommendedName>
    </domain>
</protein>
<accession>P00561</accession>
<accession>Q47659</accession>
<accession>Q6LEL0</accession>
<feature type="chain" id="PRO_0000066681" description="Bifunctional aspartokinase/homoserine dehydrogenase 1">
    <location>
        <begin position="1"/>
        <end position="820"/>
    </location>
</feature>
<feature type="domain" description="ACT 1" evidence="6">
    <location>
        <begin position="320"/>
        <end position="394"/>
    </location>
</feature>
<feature type="domain" description="ACT 2" evidence="6">
    <location>
        <begin position="401"/>
        <end position="478"/>
    </location>
</feature>
<feature type="region of interest" description="Aspartokinase">
    <location>
        <begin position="1"/>
        <end position="249"/>
    </location>
</feature>
<feature type="region of interest" description="Interface">
    <location>
        <begin position="250"/>
        <end position="470"/>
    </location>
</feature>
<feature type="region of interest" description="Homoserine dehydrogenase">
    <location>
        <begin position="471"/>
        <end position="820"/>
    </location>
</feature>
<feature type="active site" description="Proton donor" evidence="5">
    <location>
        <position position="682"/>
    </location>
</feature>
<feature type="binding site" evidence="3">
    <location>
        <position position="473"/>
    </location>
    <ligand>
        <name>NAD(+)</name>
        <dbReference type="ChEBI" id="CHEBI:57540"/>
    </ligand>
</feature>
<feature type="binding site" evidence="3">
    <location>
        <position position="475"/>
    </location>
    <ligand>
        <name>NAD(+)</name>
        <dbReference type="ChEBI" id="CHEBI:57540"/>
    </ligand>
</feature>
<feature type="binding site" evidence="3">
    <location>
        <position position="476"/>
    </location>
    <ligand>
        <name>NAD(+)</name>
        <dbReference type="ChEBI" id="CHEBI:57540"/>
    </ligand>
</feature>
<feature type="binding site" evidence="1">
    <location>
        <position position="476"/>
    </location>
    <ligand>
        <name>NADP(+)</name>
        <dbReference type="ChEBI" id="CHEBI:58349"/>
    </ligand>
</feature>
<feature type="binding site" evidence="2">
    <location>
        <position position="476"/>
    </location>
    <ligand>
        <name>NADPH</name>
        <dbReference type="ChEBI" id="CHEBI:57783"/>
    </ligand>
</feature>
<feature type="binding site" evidence="3">
    <location>
        <position position="504"/>
    </location>
    <ligand>
        <name>NAD(+)</name>
        <dbReference type="ChEBI" id="CHEBI:57540"/>
    </ligand>
</feature>
<feature type="binding site" evidence="1">
    <location>
        <position position="507"/>
    </location>
    <ligand>
        <name>NADP(+)</name>
        <dbReference type="ChEBI" id="CHEBI:58349"/>
    </ligand>
</feature>
<feature type="binding site" evidence="3">
    <location>
        <position position="555"/>
    </location>
    <ligand>
        <name>NAD(+)</name>
        <dbReference type="ChEBI" id="CHEBI:57540"/>
    </ligand>
</feature>
<feature type="binding site" evidence="1">
    <location>
        <position position="555"/>
    </location>
    <ligand>
        <name>NADP(+)</name>
        <dbReference type="ChEBI" id="CHEBI:58349"/>
    </ligand>
</feature>
<feature type="binding site" evidence="2">
    <location>
        <position position="555"/>
    </location>
    <ligand>
        <name>NADPH</name>
        <dbReference type="ChEBI" id="CHEBI:57783"/>
    </ligand>
</feature>
<feature type="binding site" evidence="2">
    <location>
        <position position="556"/>
    </location>
    <ligand>
        <name>NADPH</name>
        <dbReference type="ChEBI" id="CHEBI:57783"/>
    </ligand>
</feature>
<feature type="binding site" evidence="1">
    <location>
        <position position="579"/>
    </location>
    <ligand>
        <name>NADP(+)</name>
        <dbReference type="ChEBI" id="CHEBI:58349"/>
    </ligand>
</feature>
<feature type="binding site" evidence="2">
    <location>
        <position position="579"/>
    </location>
    <ligand>
        <name>NADPH</name>
        <dbReference type="ChEBI" id="CHEBI:57783"/>
    </ligand>
</feature>
<feature type="binding site" evidence="3">
    <location>
        <position position="606"/>
    </location>
    <ligand>
        <name>Na(+)</name>
        <dbReference type="ChEBI" id="CHEBI:29101"/>
    </ligand>
</feature>
<feature type="binding site" evidence="3">
    <location>
        <position position="609"/>
    </location>
    <ligand>
        <name>Na(+)</name>
        <dbReference type="ChEBI" id="CHEBI:29101"/>
    </ligand>
</feature>
<feature type="binding site" evidence="3">
    <location>
        <position position="611"/>
    </location>
    <ligand>
        <name>Na(+)</name>
        <dbReference type="ChEBI" id="CHEBI:29101"/>
    </ligand>
</feature>
<feature type="binding site" evidence="3">
    <location>
        <position position="613"/>
    </location>
    <ligand>
        <name>Na(+)</name>
        <dbReference type="ChEBI" id="CHEBI:29101"/>
    </ligand>
</feature>
<feature type="binding site" evidence="1">
    <location>
        <position position="664"/>
    </location>
    <ligand>
        <name>NADP(+)</name>
        <dbReference type="ChEBI" id="CHEBI:58349"/>
    </ligand>
</feature>
<feature type="binding site" evidence="3">
    <location>
        <position position="667"/>
    </location>
    <ligand>
        <name>L-homoserine</name>
        <dbReference type="ChEBI" id="CHEBI:57476"/>
    </ligand>
</feature>
<feature type="binding site" evidence="1">
    <location>
        <position position="667"/>
    </location>
    <ligand>
        <name>NADP(+)</name>
        <dbReference type="ChEBI" id="CHEBI:58349"/>
    </ligand>
</feature>
<feature type="binding site" evidence="3">
    <location>
        <position position="678"/>
    </location>
    <ligand>
        <name>L-homoserine</name>
        <dbReference type="ChEBI" id="CHEBI:57476"/>
    </ligand>
</feature>
<feature type="binding site" evidence="3">
    <location>
        <position position="798"/>
    </location>
    <ligand>
        <name>NAD(+)</name>
        <dbReference type="ChEBI" id="CHEBI:57540"/>
    </ligand>
</feature>
<feature type="binding site" evidence="1">
    <location>
        <position position="798"/>
    </location>
    <ligand>
        <name>NADP(+)</name>
        <dbReference type="ChEBI" id="CHEBI:58349"/>
    </ligand>
</feature>
<feature type="binding site" evidence="2">
    <location>
        <position position="798"/>
    </location>
    <ligand>
        <name>NADPH</name>
        <dbReference type="ChEBI" id="CHEBI:57783"/>
    </ligand>
</feature>
<feature type="sequence conflict" description="In Ref. 1; CAA23660/AAA83914." evidence="7" ref="1">
    <original>V</original>
    <variation>L</variation>
    <location>
        <position position="11"/>
    </location>
</feature>
<feature type="sequence conflict" description="In Ref. 8; AA sequence." evidence="7" ref="8">
    <original>Q</original>
    <variation>E</variation>
    <location>
        <position position="113"/>
    </location>
</feature>
<feature type="sequence conflict" description="In Ref. 1; CAA23660/AAA83914." evidence="7" ref="1">
    <original>D</original>
    <variation>N</variation>
    <location>
        <position position="230"/>
    </location>
</feature>
<feature type="sequence conflict" description="In Ref. 1; CAA23660/AAA83914." evidence="7" ref="1">
    <original>Q</original>
    <variation>L</variation>
    <location>
        <position position="375"/>
    </location>
</feature>
<feature type="sequence conflict" description="In Ref. 1; CAA23660/AAA83914." evidence="7" ref="1">
    <original>T</original>
    <variation>A</variation>
    <location>
        <position position="393"/>
    </location>
</feature>
<feature type="sequence conflict" description="In Ref. 1; CAA23660/AAA83914." evidence="7" ref="1">
    <original>M</original>
    <variation>L</variation>
    <location>
        <position position="406"/>
    </location>
</feature>
<feature type="sequence conflict" description="In Ref. 1; CAA23660/AAA83914." evidence="7" ref="1">
    <original>D</original>
    <variation>N</variation>
    <location>
        <position position="553"/>
    </location>
</feature>
<feature type="sequence conflict" description="In Ref. 10; AAA24671." evidence="7" ref="10">
    <original>DY</original>
    <variation>IT</variation>
    <location>
        <begin position="587"/>
        <end position="588"/>
    </location>
</feature>
<feature type="sequence conflict" description="In Ref. 1; CAA23660/AAA83914." evidence="7" ref="1">
    <original>T</original>
    <variation>I</variation>
    <location>
        <position position="607"/>
    </location>
</feature>
<feature type="sequence conflict" description="In Ref. 1; CAA23660/AAA83914." evidence="7" ref="1">
    <original>T</original>
    <variation>R</variation>
    <location>
        <position position="658"/>
    </location>
</feature>
<feature type="strand" evidence="8">
    <location>
        <begin position="306"/>
        <end position="320"/>
    </location>
</feature>
<feature type="turn" evidence="8">
    <location>
        <begin position="325"/>
        <end position="327"/>
    </location>
</feature>
<feature type="helix" evidence="8">
    <location>
        <begin position="331"/>
        <end position="341"/>
    </location>
</feature>
<feature type="strand" evidence="8">
    <location>
        <begin position="348"/>
        <end position="353"/>
    </location>
</feature>
<feature type="strand" evidence="8">
    <location>
        <begin position="358"/>
        <end position="363"/>
    </location>
</feature>
<feature type="helix" evidence="8">
    <location>
        <begin position="364"/>
        <end position="366"/>
    </location>
</feature>
<feature type="helix" evidence="8">
    <location>
        <begin position="367"/>
        <end position="377"/>
    </location>
</feature>
<feature type="helix" evidence="8">
    <location>
        <begin position="379"/>
        <end position="383"/>
    </location>
</feature>
<feature type="strand" evidence="8">
    <location>
        <begin position="391"/>
        <end position="406"/>
    </location>
</feature>
<feature type="helix" evidence="8">
    <location>
        <begin position="409"/>
        <end position="422"/>
    </location>
</feature>
<feature type="strand" evidence="8">
    <location>
        <begin position="429"/>
        <end position="432"/>
    </location>
</feature>
<feature type="strand" evidence="8">
    <location>
        <begin position="434"/>
        <end position="444"/>
    </location>
</feature>
<feature type="helix" evidence="8">
    <location>
        <begin position="445"/>
        <end position="447"/>
    </location>
</feature>
<feature type="helix" evidence="8">
    <location>
        <begin position="448"/>
        <end position="459"/>
    </location>
</feature>
<dbReference type="EC" id="2.7.2.4"/>
<dbReference type="EC" id="1.1.1.3"/>
<dbReference type="EMBL" id="V00361">
    <property type="protein sequence ID" value="CAA23660.1"/>
    <property type="molecule type" value="Genomic_DNA"/>
</dbReference>
<dbReference type="EMBL" id="J01706">
    <property type="protein sequence ID" value="AAA83914.1"/>
    <property type="molecule type" value="Genomic_DNA"/>
</dbReference>
<dbReference type="EMBL" id="U14003">
    <property type="protein sequence ID" value="AAA97301.1"/>
    <property type="molecule type" value="Genomic_DNA"/>
</dbReference>
<dbReference type="EMBL" id="U00096">
    <property type="protein sequence ID" value="AAC73113.1"/>
    <property type="molecule type" value="Genomic_DNA"/>
</dbReference>
<dbReference type="EMBL" id="AP009048">
    <property type="protein sequence ID" value="BAB96579.2"/>
    <property type="molecule type" value="Genomic_DNA"/>
</dbReference>
<dbReference type="EMBL" id="V00360">
    <property type="protein sequence ID" value="CAA23659.1"/>
    <property type="molecule type" value="Genomic_DNA"/>
</dbReference>
<dbReference type="EMBL" id="X68872">
    <property type="protein sequence ID" value="CAA48734.1"/>
    <property type="molecule type" value="Genomic_DNA"/>
</dbReference>
<dbReference type="EMBL" id="M28570">
    <property type="protein sequence ID" value="AAA24673.1"/>
    <property type="molecule type" value="Genomic_DNA"/>
</dbReference>
<dbReference type="EMBL" id="M10644">
    <property type="protein sequence ID" value="AAA24671.1"/>
    <property type="molecule type" value="Genomic_DNA"/>
</dbReference>
<dbReference type="PIR" id="B64720">
    <property type="entry name" value="DEECK"/>
</dbReference>
<dbReference type="RefSeq" id="NP_414543.1">
    <property type="nucleotide sequence ID" value="NC_000913.3"/>
</dbReference>
<dbReference type="RefSeq" id="WP_001264707.1">
    <property type="nucleotide sequence ID" value="NZ_LN832404.1"/>
</dbReference>
<dbReference type="PDB" id="6MX1">
    <property type="method" value="X-ray"/>
    <property type="resolution" value="1.67 A"/>
    <property type="chains" value="A/B=301-460"/>
</dbReference>
<dbReference type="PDBsum" id="6MX1"/>
<dbReference type="SMR" id="P00561"/>
<dbReference type="BioGRID" id="4261933">
    <property type="interactions" value="245"/>
</dbReference>
<dbReference type="BioGRID" id="850170">
    <property type="interactions" value="2"/>
</dbReference>
<dbReference type="DIP" id="DIP-2907N"/>
<dbReference type="FunCoup" id="P00561">
    <property type="interactions" value="644"/>
</dbReference>
<dbReference type="IntAct" id="P00561">
    <property type="interactions" value="7"/>
</dbReference>
<dbReference type="STRING" id="511145.b0002"/>
<dbReference type="BindingDB" id="P00561"/>
<dbReference type="jPOST" id="P00561"/>
<dbReference type="PaxDb" id="511145-b0002"/>
<dbReference type="EnsemblBacteria" id="AAC73113">
    <property type="protein sequence ID" value="AAC73113"/>
    <property type="gene ID" value="b0002"/>
</dbReference>
<dbReference type="GeneID" id="945803"/>
<dbReference type="KEGG" id="ecj:JW0001"/>
<dbReference type="KEGG" id="eco:b0002"/>
<dbReference type="KEGG" id="ecoc:C3026_00010"/>
<dbReference type="PATRIC" id="fig|1411691.4.peg.2281"/>
<dbReference type="EchoBASE" id="EB0991"/>
<dbReference type="eggNOG" id="COG0460">
    <property type="taxonomic scope" value="Bacteria"/>
</dbReference>
<dbReference type="eggNOG" id="COG0527">
    <property type="taxonomic scope" value="Bacteria"/>
</dbReference>
<dbReference type="HOGENOM" id="CLU_009116_7_1_6"/>
<dbReference type="InParanoid" id="P00561"/>
<dbReference type="OMA" id="VTCNKIA"/>
<dbReference type="OrthoDB" id="9799110at2"/>
<dbReference type="PhylomeDB" id="P00561"/>
<dbReference type="BioCyc" id="EcoCyc:ASPKINIHOMOSERDEHYDROGI-MONOMER"/>
<dbReference type="BioCyc" id="MetaCyc:ASPKINIHOMOSERDEHYDROGI-MONOMER"/>
<dbReference type="BRENDA" id="1.1.1.3">
    <property type="organism ID" value="2026"/>
</dbReference>
<dbReference type="BRENDA" id="2.7.2.4">
    <property type="organism ID" value="2026"/>
</dbReference>
<dbReference type="SABIO-RK" id="P00561"/>
<dbReference type="UniPathway" id="UPA00034">
    <property type="reaction ID" value="UER00015"/>
</dbReference>
<dbReference type="UniPathway" id="UPA00050">
    <property type="reaction ID" value="UER00063"/>
</dbReference>
<dbReference type="UniPathway" id="UPA00050">
    <property type="reaction ID" value="UER00461"/>
</dbReference>
<dbReference type="UniPathway" id="UPA00051">
    <property type="reaction ID" value="UER00462"/>
</dbReference>
<dbReference type="UniPathway" id="UPA00051">
    <property type="reaction ID" value="UER00465"/>
</dbReference>
<dbReference type="PRO" id="PR:P00561"/>
<dbReference type="Proteomes" id="UP000000625">
    <property type="component" value="Chromosome"/>
</dbReference>
<dbReference type="GO" id="GO:0004072">
    <property type="term" value="F:aspartate kinase activity"/>
    <property type="evidence" value="ECO:0000314"/>
    <property type="project" value="EcoCyc"/>
</dbReference>
<dbReference type="GO" id="GO:0005524">
    <property type="term" value="F:ATP binding"/>
    <property type="evidence" value="ECO:0007669"/>
    <property type="project" value="UniProtKB-KW"/>
</dbReference>
<dbReference type="GO" id="GO:0004412">
    <property type="term" value="F:homoserine dehydrogenase activity"/>
    <property type="evidence" value="ECO:0000314"/>
    <property type="project" value="EcoCyc"/>
</dbReference>
<dbReference type="GO" id="GO:0042802">
    <property type="term" value="F:identical protein binding"/>
    <property type="evidence" value="ECO:0000314"/>
    <property type="project" value="EcoCyc"/>
</dbReference>
<dbReference type="GO" id="GO:0046872">
    <property type="term" value="F:metal ion binding"/>
    <property type="evidence" value="ECO:0007669"/>
    <property type="project" value="UniProtKB-KW"/>
</dbReference>
<dbReference type="GO" id="GO:0070403">
    <property type="term" value="F:NAD+ binding"/>
    <property type="evidence" value="ECO:0000250"/>
    <property type="project" value="UniProtKB"/>
</dbReference>
<dbReference type="GO" id="GO:0050661">
    <property type="term" value="F:NADP binding"/>
    <property type="evidence" value="ECO:0007669"/>
    <property type="project" value="InterPro"/>
</dbReference>
<dbReference type="GO" id="GO:0009090">
    <property type="term" value="P:homoserine biosynthetic process"/>
    <property type="evidence" value="ECO:0000314"/>
    <property type="project" value="EcoCyc"/>
</dbReference>
<dbReference type="GO" id="GO:0009089">
    <property type="term" value="P:lysine biosynthetic process via diaminopimelate"/>
    <property type="evidence" value="ECO:0000314"/>
    <property type="project" value="EcoCyc"/>
</dbReference>
<dbReference type="GO" id="GO:0009086">
    <property type="term" value="P:methionine biosynthetic process"/>
    <property type="evidence" value="ECO:0000250"/>
    <property type="project" value="UniProtKB"/>
</dbReference>
<dbReference type="GO" id="GO:0051289">
    <property type="term" value="P:protein homotetramerization"/>
    <property type="evidence" value="ECO:0000314"/>
    <property type="project" value="EcoCyc"/>
</dbReference>
<dbReference type="GO" id="GO:0009088">
    <property type="term" value="P:threonine biosynthetic process"/>
    <property type="evidence" value="ECO:0000250"/>
    <property type="project" value="UniProtKB"/>
</dbReference>
<dbReference type="CDD" id="cd04257">
    <property type="entry name" value="AAK_AK-HSDH"/>
    <property type="match status" value="1"/>
</dbReference>
<dbReference type="CDD" id="cd04921">
    <property type="entry name" value="ACT_AKi-HSDH-ThrA-like_1"/>
    <property type="match status" value="1"/>
</dbReference>
<dbReference type="CDD" id="cd04922">
    <property type="entry name" value="ACT_AKi-HSDH-ThrA_2"/>
    <property type="match status" value="1"/>
</dbReference>
<dbReference type="FunFam" id="3.30.2130.10:FF:000001">
    <property type="entry name" value="Bifunctional aspartokinase/homoserine dehydrogenase"/>
    <property type="match status" value="1"/>
</dbReference>
<dbReference type="FunFam" id="3.30.360.10:FF:000006">
    <property type="entry name" value="Bifunctional aspartokinase/homoserine dehydrogenase"/>
    <property type="match status" value="1"/>
</dbReference>
<dbReference type="FunFam" id="3.40.1160.10:FF:000022">
    <property type="entry name" value="Bifunctional aspartokinase/homoserine dehydrogenase"/>
    <property type="match status" value="1"/>
</dbReference>
<dbReference type="FunFam" id="3.40.50.720:FF:000083">
    <property type="entry name" value="Bifunctional aspartokinase/homoserine dehydrogenase"/>
    <property type="match status" value="1"/>
</dbReference>
<dbReference type="Gene3D" id="3.40.1160.10">
    <property type="entry name" value="Acetylglutamate kinase-like"/>
    <property type="match status" value="1"/>
</dbReference>
<dbReference type="Gene3D" id="3.30.360.10">
    <property type="entry name" value="Dihydrodipicolinate Reductase, domain 2"/>
    <property type="match status" value="1"/>
</dbReference>
<dbReference type="Gene3D" id="3.40.50.720">
    <property type="entry name" value="NAD(P)-binding Rossmann-like Domain"/>
    <property type="match status" value="1"/>
</dbReference>
<dbReference type="Gene3D" id="3.30.2130.10">
    <property type="entry name" value="VC0802-like"/>
    <property type="match status" value="1"/>
</dbReference>
<dbReference type="InterPro" id="IPR036393">
    <property type="entry name" value="AceGlu_kinase-like_sf"/>
</dbReference>
<dbReference type="InterPro" id="IPR045865">
    <property type="entry name" value="ACT-like_dom_sf"/>
</dbReference>
<dbReference type="InterPro" id="IPR054352">
    <property type="entry name" value="ACT_Aspartokinase"/>
</dbReference>
<dbReference type="InterPro" id="IPR002912">
    <property type="entry name" value="ACT_dom"/>
</dbReference>
<dbReference type="InterPro" id="IPR049638">
    <property type="entry name" value="AK-HD"/>
</dbReference>
<dbReference type="InterPro" id="IPR041743">
    <property type="entry name" value="AK-HSDH_N"/>
</dbReference>
<dbReference type="InterPro" id="IPR001048">
    <property type="entry name" value="Asp/Glu/Uridylate_kinase"/>
</dbReference>
<dbReference type="InterPro" id="IPR005106">
    <property type="entry name" value="Asp/hSer_DH_NAD-bd"/>
</dbReference>
<dbReference type="InterPro" id="IPR001341">
    <property type="entry name" value="Asp_kinase"/>
</dbReference>
<dbReference type="InterPro" id="IPR018042">
    <property type="entry name" value="Aspartate_kinase_CS"/>
</dbReference>
<dbReference type="InterPro" id="IPR011147">
    <property type="entry name" value="Bifunc_Aspkin/hSer_DH"/>
</dbReference>
<dbReference type="InterPro" id="IPR001342">
    <property type="entry name" value="HDH_cat"/>
</dbReference>
<dbReference type="InterPro" id="IPR019811">
    <property type="entry name" value="HDH_CS"/>
</dbReference>
<dbReference type="InterPro" id="IPR036291">
    <property type="entry name" value="NAD(P)-bd_dom_sf"/>
</dbReference>
<dbReference type="NCBIfam" id="TIGR00657">
    <property type="entry name" value="asp_kinases"/>
    <property type="match status" value="1"/>
</dbReference>
<dbReference type="NCBIfam" id="NF006959">
    <property type="entry name" value="PRK09436.1"/>
    <property type="match status" value="1"/>
</dbReference>
<dbReference type="PANTHER" id="PTHR43070">
    <property type="match status" value="1"/>
</dbReference>
<dbReference type="PANTHER" id="PTHR43070:SF3">
    <property type="entry name" value="HOMOSERINE DEHYDROGENASE"/>
    <property type="match status" value="1"/>
</dbReference>
<dbReference type="Pfam" id="PF00696">
    <property type="entry name" value="AA_kinase"/>
    <property type="match status" value="1"/>
</dbReference>
<dbReference type="Pfam" id="PF22468">
    <property type="entry name" value="ACT_9"/>
    <property type="match status" value="2"/>
</dbReference>
<dbReference type="Pfam" id="PF00742">
    <property type="entry name" value="Homoserine_dh"/>
    <property type="match status" value="1"/>
</dbReference>
<dbReference type="Pfam" id="PF03447">
    <property type="entry name" value="NAD_binding_3"/>
    <property type="match status" value="1"/>
</dbReference>
<dbReference type="PIRSF" id="PIRSF000727">
    <property type="entry name" value="ThrA"/>
    <property type="match status" value="1"/>
</dbReference>
<dbReference type="SUPFAM" id="SSF55021">
    <property type="entry name" value="ACT-like"/>
    <property type="match status" value="2"/>
</dbReference>
<dbReference type="SUPFAM" id="SSF53633">
    <property type="entry name" value="Carbamate kinase-like"/>
    <property type="match status" value="1"/>
</dbReference>
<dbReference type="SUPFAM" id="SSF55347">
    <property type="entry name" value="Glyceraldehyde-3-phosphate dehydrogenase-like, C-terminal domain"/>
    <property type="match status" value="1"/>
</dbReference>
<dbReference type="SUPFAM" id="SSF51735">
    <property type="entry name" value="NAD(P)-binding Rossmann-fold domains"/>
    <property type="match status" value="1"/>
</dbReference>
<dbReference type="PROSITE" id="PS51671">
    <property type="entry name" value="ACT"/>
    <property type="match status" value="2"/>
</dbReference>
<dbReference type="PROSITE" id="PS00324">
    <property type="entry name" value="ASPARTOKINASE"/>
    <property type="match status" value="1"/>
</dbReference>
<dbReference type="PROSITE" id="PS01042">
    <property type="entry name" value="HOMOSER_DHGENASE"/>
    <property type="match status" value="1"/>
</dbReference>
<reference key="1">
    <citation type="journal article" date="1980" name="Proc. Natl. Acad. Sci. U.S.A.">
        <title>Nucleotide sequence of the thrA gene of Escherichia coli.</title>
        <authorList>
            <person name="Katinka M."/>
            <person name="Cossart P."/>
            <person name="Sibilli L."/>
            <person name="Saint-Girons I."/>
            <person name="Chalvignac M.A."/>
            <person name="le Bras G."/>
            <person name="Cohen G.N."/>
            <person name="Yaniv M."/>
        </authorList>
    </citation>
    <scope>NUCLEOTIDE SEQUENCE [GENOMIC DNA]</scope>
</reference>
<reference key="2">
    <citation type="journal article" date="1992" name="Nucleic Acids Res.">
        <title>Systematic sequencing of the Escherichia coli genome: analysis of the 0-2.4 min region.</title>
        <authorList>
            <person name="Yura T."/>
            <person name="Mori H."/>
            <person name="Nagai H."/>
            <person name="Nagata T."/>
            <person name="Ishihama A."/>
            <person name="Fujita N."/>
            <person name="Isono K."/>
            <person name="Mizobuchi K."/>
            <person name="Nakata A."/>
        </authorList>
    </citation>
    <scope>NUCLEOTIDE SEQUENCE [LARGE SCALE GENOMIC DNA]</scope>
    <source>
        <strain>K12</strain>
    </source>
</reference>
<reference key="3">
    <citation type="journal article" date="1995" name="Nucleic Acids Res.">
        <title>Analysis of the Escherichia coli genome VI: DNA sequence of the region from 92.8 through 100 minutes.</title>
        <authorList>
            <person name="Burland V.D."/>
            <person name="Plunkett G. III"/>
            <person name="Sofia H.J."/>
            <person name="Daniels D.L."/>
            <person name="Blattner F.R."/>
        </authorList>
    </citation>
    <scope>NUCLEOTIDE SEQUENCE [LARGE SCALE GENOMIC DNA]</scope>
    <source>
        <strain>K12 / MG1655 / ATCC 47076</strain>
    </source>
</reference>
<reference key="4">
    <citation type="journal article" date="1997" name="Science">
        <title>The complete genome sequence of Escherichia coli K-12.</title>
        <authorList>
            <person name="Blattner F.R."/>
            <person name="Plunkett G. III"/>
            <person name="Bloch C.A."/>
            <person name="Perna N.T."/>
            <person name="Burland V."/>
            <person name="Riley M."/>
            <person name="Collado-Vides J."/>
            <person name="Glasner J.D."/>
            <person name="Rode C.K."/>
            <person name="Mayhew G.F."/>
            <person name="Gregor J."/>
            <person name="Davis N.W."/>
            <person name="Kirkpatrick H.A."/>
            <person name="Goeden M.A."/>
            <person name="Rose D.J."/>
            <person name="Mau B."/>
            <person name="Shao Y."/>
        </authorList>
    </citation>
    <scope>NUCLEOTIDE SEQUENCE [LARGE SCALE GENOMIC DNA]</scope>
    <source>
        <strain>K12 / MG1655 / ATCC 47076</strain>
    </source>
</reference>
<reference key="5">
    <citation type="journal article" date="2006" name="Mol. Syst. Biol.">
        <title>Highly accurate genome sequences of Escherichia coli K-12 strains MG1655 and W3110.</title>
        <authorList>
            <person name="Hayashi K."/>
            <person name="Morooka N."/>
            <person name="Yamamoto Y."/>
            <person name="Fujita K."/>
            <person name="Isono K."/>
            <person name="Choi S."/>
            <person name="Ohtsubo E."/>
            <person name="Baba T."/>
            <person name="Wanner B.L."/>
            <person name="Mori H."/>
            <person name="Horiuchi T."/>
        </authorList>
    </citation>
    <scope>NUCLEOTIDE SEQUENCE [LARGE SCALE GENOMIC DNA]</scope>
    <scope>SEQUENCE REVISION</scope>
    <source>
        <strain>K12 / W3110 / ATCC 27325 / DSM 5911</strain>
    </source>
</reference>
<reference key="6">
    <citation type="journal article" date="1982" name="J. Biol. Chem.">
        <title>Initiation, pausing, and termination of transcription in the threonine operon regulatory region of Escherichia coli.</title>
        <authorList>
            <person name="Gardner J.F."/>
        </authorList>
    </citation>
    <scope>NUCLEOTIDE SEQUENCE [GENOMIC DNA] OF 1-10</scope>
</reference>
<reference key="7">
    <citation type="journal article" date="1985" name="J. Mol. Biol.">
        <title>Identification and characterization of mutants affecting transcription termination at the threonine operon attenuator.</title>
        <authorList>
            <person name="Lynn S.P."/>
            <person name="Bauer C.E."/>
            <person name="Chapman K.A."/>
            <person name="Gardner J.F."/>
        </authorList>
    </citation>
    <scope>NUCLEOTIDE SEQUENCE [GENOMIC DNA] OF 1-10</scope>
</reference>
<reference key="8">
    <citation type="journal article" date="1979" name="Biochimie">
        <title>The primary structure of Escherichia coli K 12 aspartokinase I-homoserine dehydrogenase I: sequence of cyanogen bromide peptide CB 3.</title>
        <authorList>
            <person name="Sibilli L."/>
            <person name="le Bras G."/>
            <person name="Cossart P."/>
            <person name="Chalvignac M.A."/>
            <person name="le Bras G."/>
            <person name="Briley P.A."/>
            <person name="Cohen G.N."/>
        </authorList>
    </citation>
    <scope>PROTEIN SEQUENCE OF 51-129</scope>
</reference>
<reference key="9">
    <citation type="journal article" date="1983" name="J. Biol. Chem.">
        <title>Nucleotide sequence of the metL gene of Escherichia coli. Its product, the bifunctional aspartokinase II-homoserine dehydrogenase II, and the bifunctional product of the thrA gene, aspartokinase I-homoserine dehydrogenase I, derive from a common ancestor.</title>
        <authorList>
            <person name="Zakin M.M."/>
            <person name="Duchange N."/>
            <person name="Ferrara P."/>
            <person name="Cohen G.N."/>
        </authorList>
    </citation>
    <scope>SEQUENCE REVISION TO 11</scope>
</reference>
<reference key="10">
    <citation type="journal article" date="1979" name="Mol. Gen. Genet.">
        <title>Construction and expression of a hybrid plasmid containing the Escherichia coli thrA and thrB genes.</title>
        <authorList>
            <person name="Cossart P."/>
            <person name="Katinka M."/>
            <person name="Yaniv M."/>
        </authorList>
    </citation>
    <scope>NUCLEOTIDE SEQUENCE [GENOMIC DNA] OF 553-588</scope>
</reference>
<comment type="function">
    <text evidence="4">Bifunctional aspartate kinase and homoserine dehydrogenase that catalyzes the first and the third steps toward the synthesis of lysine, methionine and threonine from aspartate.</text>
</comment>
<comment type="catalytic activity">
    <reaction evidence="4">
        <text>L-homoserine + NADP(+) = L-aspartate 4-semialdehyde + NADPH + H(+)</text>
        <dbReference type="Rhea" id="RHEA:15761"/>
        <dbReference type="ChEBI" id="CHEBI:15378"/>
        <dbReference type="ChEBI" id="CHEBI:57476"/>
        <dbReference type="ChEBI" id="CHEBI:57783"/>
        <dbReference type="ChEBI" id="CHEBI:58349"/>
        <dbReference type="ChEBI" id="CHEBI:537519"/>
        <dbReference type="EC" id="1.1.1.3"/>
    </reaction>
    <physiologicalReaction direction="right-to-left" evidence="4">
        <dbReference type="Rhea" id="RHEA:15763"/>
    </physiologicalReaction>
</comment>
<comment type="catalytic activity">
    <reaction evidence="4">
        <text>L-homoserine + NAD(+) = L-aspartate 4-semialdehyde + NADH + H(+)</text>
        <dbReference type="Rhea" id="RHEA:15757"/>
        <dbReference type="ChEBI" id="CHEBI:15378"/>
        <dbReference type="ChEBI" id="CHEBI:57476"/>
        <dbReference type="ChEBI" id="CHEBI:57540"/>
        <dbReference type="ChEBI" id="CHEBI:57945"/>
        <dbReference type="ChEBI" id="CHEBI:537519"/>
        <dbReference type="EC" id="1.1.1.3"/>
    </reaction>
    <physiologicalReaction direction="right-to-left" evidence="4">
        <dbReference type="Rhea" id="RHEA:15759"/>
    </physiologicalReaction>
</comment>
<comment type="catalytic activity">
    <reaction evidence="4">
        <text>L-aspartate + ATP = 4-phospho-L-aspartate + ADP</text>
        <dbReference type="Rhea" id="RHEA:23776"/>
        <dbReference type="ChEBI" id="CHEBI:29991"/>
        <dbReference type="ChEBI" id="CHEBI:30616"/>
        <dbReference type="ChEBI" id="CHEBI:57535"/>
        <dbReference type="ChEBI" id="CHEBI:456216"/>
        <dbReference type="EC" id="2.7.2.4"/>
    </reaction>
    <physiologicalReaction direction="left-to-right" evidence="4">
        <dbReference type="Rhea" id="RHEA:23777"/>
    </physiologicalReaction>
</comment>
<comment type="cofactor">
    <cofactor evidence="3">
        <name>a metal cation</name>
        <dbReference type="ChEBI" id="CHEBI:25213"/>
    </cofactor>
    <text evidence="3">A sodium ion is seen in the structure; a metal ion may subtly affect the relative position of the nucleotide-binding region to influence enzyme activity, and could increase the stability of the enzyme.</text>
</comment>
<comment type="activity regulation">
    <text>The enzyme activities are regulated allosterically by L-threonine.</text>
</comment>
<comment type="pathway">
    <text evidence="4">Amino-acid biosynthesis; L-lysine biosynthesis via DAP pathway; (S)-tetrahydrodipicolinate from L-aspartate: step 1/4.</text>
</comment>
<comment type="pathway">
    <text evidence="4">Amino-acid biosynthesis; L-methionine biosynthesis via de novo pathway; L-homoserine from L-aspartate: step 1/3.</text>
</comment>
<comment type="pathway">
    <text evidence="4">Amino-acid biosynthesis; L-methionine biosynthesis via de novo pathway; L-homoserine from L-aspartate: step 3/3.</text>
</comment>
<comment type="pathway">
    <text evidence="4">Amino-acid biosynthesis; L-threonine biosynthesis; L-threonine from L-aspartate: step 1/5.</text>
</comment>
<comment type="pathway">
    <text evidence="4">Amino-acid biosynthesis; L-threonine biosynthesis; L-threonine from L-aspartate: step 3/5.</text>
</comment>
<comment type="subunit">
    <text>Homotetramer.</text>
</comment>
<comment type="miscellaneous">
    <text>Aspartokinase II-homoserine dehydrogenase II and aspartokinase III also catalyze the same reaction(s).</text>
</comment>
<comment type="similarity">
    <text evidence="7">In the N-terminal section; belongs to the aspartokinase family.</text>
</comment>
<comment type="similarity">
    <text evidence="7">In the C-terminal section; belongs to the homoserine dehydrogenase family.</text>
</comment>
<name>AK1H_ECOLI</name>
<keyword id="KW-0002">3D-structure</keyword>
<keyword id="KW-0021">Allosteric enzyme</keyword>
<keyword id="KW-0028">Amino-acid biosynthesis</keyword>
<keyword id="KW-0067">ATP-binding</keyword>
<keyword id="KW-0903">Direct protein sequencing</keyword>
<keyword id="KW-0418">Kinase</keyword>
<keyword id="KW-0457">Lysine biosynthesis</keyword>
<keyword id="KW-0479">Metal-binding</keyword>
<keyword id="KW-0486">Methionine biosynthesis</keyword>
<keyword id="KW-0511">Multifunctional enzyme</keyword>
<keyword id="KW-0520">NAD</keyword>
<keyword id="KW-0521">NADP</keyword>
<keyword id="KW-0547">Nucleotide-binding</keyword>
<keyword id="KW-0560">Oxidoreductase</keyword>
<keyword id="KW-1185">Reference proteome</keyword>
<keyword id="KW-0677">Repeat</keyword>
<keyword id="KW-0915">Sodium</keyword>
<keyword id="KW-0791">Threonine biosynthesis</keyword>
<keyword id="KW-0808">Transferase</keyword>
<evidence type="ECO:0000250" key="1">
    <source>
        <dbReference type="UniProtKB" id="F9VNG5"/>
    </source>
</evidence>
<evidence type="ECO:0000250" key="2">
    <source>
        <dbReference type="UniProtKB" id="O58802"/>
    </source>
</evidence>
<evidence type="ECO:0000250" key="3">
    <source>
        <dbReference type="UniProtKB" id="P31116"/>
    </source>
</evidence>
<evidence type="ECO:0000250" key="4">
    <source>
        <dbReference type="UniProtKB" id="Q9SA18"/>
    </source>
</evidence>
<evidence type="ECO:0000255" key="5"/>
<evidence type="ECO:0000255" key="6">
    <source>
        <dbReference type="PROSITE-ProRule" id="PRU01007"/>
    </source>
</evidence>
<evidence type="ECO:0000305" key="7"/>
<evidence type="ECO:0007829" key="8">
    <source>
        <dbReference type="PDB" id="6MX1"/>
    </source>
</evidence>
<organism>
    <name type="scientific">Escherichia coli (strain K12)</name>
    <dbReference type="NCBI Taxonomy" id="83333"/>
    <lineage>
        <taxon>Bacteria</taxon>
        <taxon>Pseudomonadati</taxon>
        <taxon>Pseudomonadota</taxon>
        <taxon>Gammaproteobacteria</taxon>
        <taxon>Enterobacterales</taxon>
        <taxon>Enterobacteriaceae</taxon>
        <taxon>Escherichia</taxon>
    </lineage>
</organism>
<sequence length="820" mass="89120">MRVLKFGGTSVANAERFLRVADILESNARQGQVATVLSAPAKITNHLVAMIEKTISGQDALPNISDAERIFAELLTGLAAAQPGFPLAQLKTFVDQEFAQIKHVLHGISLLGQCPDSINAALICRGEKMSIAIMAGVLEARGHNVTVIDPVEKLLAVGHYLESTVDIAESTRRIAASRIPADHMVLMAGFTAGNEKGELVVLGRNGSDYSAAVLAACLRADCCEIWTDVDGVYTCDPRQVPDARLLKSMSYQEAMELSYFGAKVLHPRTITPIAQFQIPCLIKNTGNPQAPGTLIGASRDEDELPVKGISNLNNMAMFSVSGPGMKGMVGMAARVFAAMSRARISVVLITQSSSEYSISFCVPQSDCVRAERAMQEEFYLELKEGLLEPLAVTERLAIISVVGDGMRTLRGISAKFFAALARANINIVAIAQGSSERSISVVVNNDDATTGVRVTHQMLFNTDQVIEVFVIGVGGVGGALLEQLKRQQSWLKNKHIDLRVCGVANSKALLTNVHGLNLENWQEELAQAKEPFNLGRLIRLVKEYHLLNPVIVDCTSSQAVADQYADFLREGFHVVTPNKKANTSSMDYYHQLRYAAEKSRRKFLYDTNVGAGLPVIENLQNLLNAGDELMKFSGILSGSLSYIFGKLDEGMSFSEATTLAREMGYTEPDPRDDLSGMDVARKLLILARETGRELELADIEIEPVLPAEFNAEGDVAAFMANLSQLDDLFAARVAKARDEGKVLRYVGNIDEDGVCRVKIAEVDGNDPLFKVKNGENALAFYSHYYQPLPLVLRGYGAGNDVTAAGVFADLLRTLSWKLGV</sequence>
<proteinExistence type="evidence at protein level"/>
<gene>
    <name type="primary">thrA</name>
    <name type="synonym">thrA1</name>
    <name type="synonym">thrA2</name>
    <name type="ordered locus">b0002</name>
    <name type="ordered locus">JW0001</name>
</gene>